<evidence type="ECO:0000255" key="1">
    <source>
        <dbReference type="HAMAP-Rule" id="MF_00163"/>
    </source>
</evidence>
<protein>
    <recommendedName>
        <fullName evidence="1">Peptide deformylase</fullName>
        <shortName evidence="1">PDF</shortName>
        <ecNumber evidence="1">3.5.1.88</ecNumber>
    </recommendedName>
    <alternativeName>
        <fullName evidence="1">Polypeptide deformylase</fullName>
    </alternativeName>
</protein>
<proteinExistence type="inferred from homology"/>
<dbReference type="EC" id="3.5.1.88" evidence="1"/>
<dbReference type="EMBL" id="CP001472">
    <property type="protein sequence ID" value="ACO32474.1"/>
    <property type="molecule type" value="Genomic_DNA"/>
</dbReference>
<dbReference type="SMR" id="C1F541"/>
<dbReference type="FunCoup" id="C1F541">
    <property type="interactions" value="501"/>
</dbReference>
<dbReference type="STRING" id="240015.ACP_3128"/>
<dbReference type="KEGG" id="aca:ACP_3128"/>
<dbReference type="eggNOG" id="COG0242">
    <property type="taxonomic scope" value="Bacteria"/>
</dbReference>
<dbReference type="HOGENOM" id="CLU_061901_2_1_0"/>
<dbReference type="InParanoid" id="C1F541"/>
<dbReference type="OrthoDB" id="9784988at2"/>
<dbReference type="Proteomes" id="UP000002207">
    <property type="component" value="Chromosome"/>
</dbReference>
<dbReference type="GO" id="GO:0046872">
    <property type="term" value="F:metal ion binding"/>
    <property type="evidence" value="ECO:0007669"/>
    <property type="project" value="UniProtKB-KW"/>
</dbReference>
<dbReference type="GO" id="GO:0042586">
    <property type="term" value="F:peptide deformylase activity"/>
    <property type="evidence" value="ECO:0007669"/>
    <property type="project" value="UniProtKB-UniRule"/>
</dbReference>
<dbReference type="GO" id="GO:0043686">
    <property type="term" value="P:co-translational protein modification"/>
    <property type="evidence" value="ECO:0007669"/>
    <property type="project" value="TreeGrafter"/>
</dbReference>
<dbReference type="GO" id="GO:0006412">
    <property type="term" value="P:translation"/>
    <property type="evidence" value="ECO:0007669"/>
    <property type="project" value="UniProtKB-UniRule"/>
</dbReference>
<dbReference type="CDD" id="cd00487">
    <property type="entry name" value="Pep_deformylase"/>
    <property type="match status" value="1"/>
</dbReference>
<dbReference type="FunFam" id="3.90.45.10:FF:000005">
    <property type="entry name" value="Peptide deformylase"/>
    <property type="match status" value="1"/>
</dbReference>
<dbReference type="Gene3D" id="3.90.45.10">
    <property type="entry name" value="Peptide deformylase"/>
    <property type="match status" value="1"/>
</dbReference>
<dbReference type="HAMAP" id="MF_00163">
    <property type="entry name" value="Pep_deformylase"/>
    <property type="match status" value="1"/>
</dbReference>
<dbReference type="InterPro" id="IPR023635">
    <property type="entry name" value="Peptide_deformylase"/>
</dbReference>
<dbReference type="InterPro" id="IPR036821">
    <property type="entry name" value="Peptide_deformylase_sf"/>
</dbReference>
<dbReference type="NCBIfam" id="TIGR00079">
    <property type="entry name" value="pept_deformyl"/>
    <property type="match status" value="1"/>
</dbReference>
<dbReference type="NCBIfam" id="NF001159">
    <property type="entry name" value="PRK00150.1-3"/>
    <property type="match status" value="1"/>
</dbReference>
<dbReference type="PANTHER" id="PTHR10458">
    <property type="entry name" value="PEPTIDE DEFORMYLASE"/>
    <property type="match status" value="1"/>
</dbReference>
<dbReference type="PANTHER" id="PTHR10458:SF22">
    <property type="entry name" value="PEPTIDE DEFORMYLASE"/>
    <property type="match status" value="1"/>
</dbReference>
<dbReference type="Pfam" id="PF01327">
    <property type="entry name" value="Pep_deformylase"/>
    <property type="match status" value="1"/>
</dbReference>
<dbReference type="PIRSF" id="PIRSF004749">
    <property type="entry name" value="Pep_def"/>
    <property type="match status" value="1"/>
</dbReference>
<dbReference type="PRINTS" id="PR01576">
    <property type="entry name" value="PDEFORMYLASE"/>
</dbReference>
<dbReference type="SUPFAM" id="SSF56420">
    <property type="entry name" value="Peptide deformylase"/>
    <property type="match status" value="1"/>
</dbReference>
<gene>
    <name evidence="1" type="primary">def</name>
    <name type="ordered locus">ACP_3128</name>
</gene>
<name>DEF_ACIC5</name>
<sequence>MMIRPIVKYPDPVLQQPAEPVTEFNEELRALVDDMFESMYEAKGIGLAAPQIGISKRLTVIDLSFKENPDEKIVLINPEIIHREGRQYEEEGCLSLPDIREKVVRAEKVTVRAQNLDGEWFEMDGEELLSRAFQHEIDHLDGVLFIFRISALKRDLVLRRIRKMQRAGEW</sequence>
<reference key="1">
    <citation type="journal article" date="2009" name="Appl. Environ. Microbiol.">
        <title>Three genomes from the phylum Acidobacteria provide insight into the lifestyles of these microorganisms in soils.</title>
        <authorList>
            <person name="Ward N.L."/>
            <person name="Challacombe J.F."/>
            <person name="Janssen P.H."/>
            <person name="Henrissat B."/>
            <person name="Coutinho P.M."/>
            <person name="Wu M."/>
            <person name="Xie G."/>
            <person name="Haft D.H."/>
            <person name="Sait M."/>
            <person name="Badger J."/>
            <person name="Barabote R.D."/>
            <person name="Bradley B."/>
            <person name="Brettin T.S."/>
            <person name="Brinkac L.M."/>
            <person name="Bruce D."/>
            <person name="Creasy T."/>
            <person name="Daugherty S.C."/>
            <person name="Davidsen T.M."/>
            <person name="DeBoy R.T."/>
            <person name="Detter J.C."/>
            <person name="Dodson R.J."/>
            <person name="Durkin A.S."/>
            <person name="Ganapathy A."/>
            <person name="Gwinn-Giglio M."/>
            <person name="Han C.S."/>
            <person name="Khouri H."/>
            <person name="Kiss H."/>
            <person name="Kothari S.P."/>
            <person name="Madupu R."/>
            <person name="Nelson K.E."/>
            <person name="Nelson W.C."/>
            <person name="Paulsen I."/>
            <person name="Penn K."/>
            <person name="Ren Q."/>
            <person name="Rosovitz M.J."/>
            <person name="Selengut J.D."/>
            <person name="Shrivastava S."/>
            <person name="Sullivan S.A."/>
            <person name="Tapia R."/>
            <person name="Thompson L.S."/>
            <person name="Watkins K.L."/>
            <person name="Yang Q."/>
            <person name="Yu C."/>
            <person name="Zafar N."/>
            <person name="Zhou L."/>
            <person name="Kuske C.R."/>
        </authorList>
    </citation>
    <scope>NUCLEOTIDE SEQUENCE [LARGE SCALE GENOMIC DNA]</scope>
    <source>
        <strain>ATCC 51196 / DSM 11244 / BCRC 80197 / JCM 7670 / NBRC 15755 / NCIMB 13165 / 161</strain>
    </source>
</reference>
<accession>C1F541</accession>
<keyword id="KW-0378">Hydrolase</keyword>
<keyword id="KW-0408">Iron</keyword>
<keyword id="KW-0479">Metal-binding</keyword>
<keyword id="KW-0648">Protein biosynthesis</keyword>
<keyword id="KW-1185">Reference proteome</keyword>
<comment type="function">
    <text evidence="1">Removes the formyl group from the N-terminal Met of newly synthesized proteins. Requires at least a dipeptide for an efficient rate of reaction. N-terminal L-methionine is a prerequisite for activity but the enzyme has broad specificity at other positions.</text>
</comment>
<comment type="catalytic activity">
    <reaction evidence="1">
        <text>N-terminal N-formyl-L-methionyl-[peptide] + H2O = N-terminal L-methionyl-[peptide] + formate</text>
        <dbReference type="Rhea" id="RHEA:24420"/>
        <dbReference type="Rhea" id="RHEA-COMP:10639"/>
        <dbReference type="Rhea" id="RHEA-COMP:10640"/>
        <dbReference type="ChEBI" id="CHEBI:15377"/>
        <dbReference type="ChEBI" id="CHEBI:15740"/>
        <dbReference type="ChEBI" id="CHEBI:49298"/>
        <dbReference type="ChEBI" id="CHEBI:64731"/>
        <dbReference type="EC" id="3.5.1.88"/>
    </reaction>
</comment>
<comment type="cofactor">
    <cofactor evidence="1">
        <name>Fe(2+)</name>
        <dbReference type="ChEBI" id="CHEBI:29033"/>
    </cofactor>
    <text evidence="1">Binds 1 Fe(2+) ion.</text>
</comment>
<comment type="similarity">
    <text evidence="1">Belongs to the polypeptide deformylase family.</text>
</comment>
<organism>
    <name type="scientific">Acidobacterium capsulatum (strain ATCC 51196 / DSM 11244 / BCRC 80197 / JCM 7670 / NBRC 15755 / NCIMB 13165 / 161)</name>
    <dbReference type="NCBI Taxonomy" id="240015"/>
    <lineage>
        <taxon>Bacteria</taxon>
        <taxon>Pseudomonadati</taxon>
        <taxon>Acidobacteriota</taxon>
        <taxon>Terriglobia</taxon>
        <taxon>Terriglobales</taxon>
        <taxon>Acidobacteriaceae</taxon>
        <taxon>Acidobacterium</taxon>
    </lineage>
</organism>
<feature type="chain" id="PRO_1000200714" description="Peptide deformylase">
    <location>
        <begin position="1"/>
        <end position="170"/>
    </location>
</feature>
<feature type="active site" evidence="1">
    <location>
        <position position="136"/>
    </location>
</feature>
<feature type="binding site" evidence="1">
    <location>
        <position position="93"/>
    </location>
    <ligand>
        <name>Fe cation</name>
        <dbReference type="ChEBI" id="CHEBI:24875"/>
    </ligand>
</feature>
<feature type="binding site" evidence="1">
    <location>
        <position position="135"/>
    </location>
    <ligand>
        <name>Fe cation</name>
        <dbReference type="ChEBI" id="CHEBI:24875"/>
    </ligand>
</feature>
<feature type="binding site" evidence="1">
    <location>
        <position position="139"/>
    </location>
    <ligand>
        <name>Fe cation</name>
        <dbReference type="ChEBI" id="CHEBI:24875"/>
    </ligand>
</feature>